<accession>Q1J7B7</accession>
<organism>
    <name type="scientific">Streptococcus pyogenes serotype M4 (strain MGAS10750)</name>
    <dbReference type="NCBI Taxonomy" id="370554"/>
    <lineage>
        <taxon>Bacteria</taxon>
        <taxon>Bacillati</taxon>
        <taxon>Bacillota</taxon>
        <taxon>Bacilli</taxon>
        <taxon>Lactobacillales</taxon>
        <taxon>Streptococcaceae</taxon>
        <taxon>Streptococcus</taxon>
    </lineage>
</organism>
<proteinExistence type="inferred from homology"/>
<protein>
    <recommendedName>
        <fullName evidence="1">Large ribosomal subunit protein bL35</fullName>
    </recommendedName>
    <alternativeName>
        <fullName evidence="3">50S ribosomal protein L35</fullName>
    </alternativeName>
</protein>
<evidence type="ECO:0000255" key="1">
    <source>
        <dbReference type="HAMAP-Rule" id="MF_00514"/>
    </source>
</evidence>
<evidence type="ECO:0000256" key="2">
    <source>
        <dbReference type="SAM" id="MobiDB-lite"/>
    </source>
</evidence>
<evidence type="ECO:0000305" key="3"/>
<sequence>MPKQKTHRASAKRFKRTGSGGLKRFRAFTSHRFHGKTKKQRRHLRKAGLVSSGDFKRIKAMVTGL</sequence>
<keyword id="KW-0687">Ribonucleoprotein</keyword>
<keyword id="KW-0689">Ribosomal protein</keyword>
<dbReference type="EMBL" id="CP000262">
    <property type="protein sequence ID" value="ABF37657.1"/>
    <property type="molecule type" value="Genomic_DNA"/>
</dbReference>
<dbReference type="SMR" id="Q1J7B7"/>
<dbReference type="KEGG" id="spi:MGAS10750_Spy0707"/>
<dbReference type="HOGENOM" id="CLU_169643_3_1_9"/>
<dbReference type="Proteomes" id="UP000002434">
    <property type="component" value="Chromosome"/>
</dbReference>
<dbReference type="GO" id="GO:0022625">
    <property type="term" value="C:cytosolic large ribosomal subunit"/>
    <property type="evidence" value="ECO:0007669"/>
    <property type="project" value="TreeGrafter"/>
</dbReference>
<dbReference type="GO" id="GO:0003735">
    <property type="term" value="F:structural constituent of ribosome"/>
    <property type="evidence" value="ECO:0007669"/>
    <property type="project" value="InterPro"/>
</dbReference>
<dbReference type="GO" id="GO:0006412">
    <property type="term" value="P:translation"/>
    <property type="evidence" value="ECO:0007669"/>
    <property type="project" value="UniProtKB-UniRule"/>
</dbReference>
<dbReference type="FunFam" id="4.10.410.60:FF:000001">
    <property type="entry name" value="50S ribosomal protein L35"/>
    <property type="match status" value="1"/>
</dbReference>
<dbReference type="Gene3D" id="4.10.410.60">
    <property type="match status" value="1"/>
</dbReference>
<dbReference type="HAMAP" id="MF_00514">
    <property type="entry name" value="Ribosomal_bL35"/>
    <property type="match status" value="1"/>
</dbReference>
<dbReference type="InterPro" id="IPR001706">
    <property type="entry name" value="Ribosomal_bL35"/>
</dbReference>
<dbReference type="InterPro" id="IPR021137">
    <property type="entry name" value="Ribosomal_bL35-like"/>
</dbReference>
<dbReference type="InterPro" id="IPR018265">
    <property type="entry name" value="Ribosomal_bL35_CS"/>
</dbReference>
<dbReference type="InterPro" id="IPR037229">
    <property type="entry name" value="Ribosomal_bL35_sf"/>
</dbReference>
<dbReference type="NCBIfam" id="TIGR00001">
    <property type="entry name" value="rpmI_bact"/>
    <property type="match status" value="1"/>
</dbReference>
<dbReference type="PANTHER" id="PTHR33343">
    <property type="entry name" value="54S RIBOSOMAL PROTEIN BL35M"/>
    <property type="match status" value="1"/>
</dbReference>
<dbReference type="PANTHER" id="PTHR33343:SF1">
    <property type="entry name" value="LARGE RIBOSOMAL SUBUNIT PROTEIN BL35M"/>
    <property type="match status" value="1"/>
</dbReference>
<dbReference type="Pfam" id="PF01632">
    <property type="entry name" value="Ribosomal_L35p"/>
    <property type="match status" value="1"/>
</dbReference>
<dbReference type="PRINTS" id="PR00064">
    <property type="entry name" value="RIBOSOMALL35"/>
</dbReference>
<dbReference type="SUPFAM" id="SSF143034">
    <property type="entry name" value="L35p-like"/>
    <property type="match status" value="1"/>
</dbReference>
<dbReference type="PROSITE" id="PS00936">
    <property type="entry name" value="RIBOSOMAL_L35"/>
    <property type="match status" value="1"/>
</dbReference>
<gene>
    <name evidence="1" type="primary">rpmI</name>
    <name type="ordered locus">MGAS10750_Spy0707</name>
</gene>
<name>RL35_STRPF</name>
<comment type="similarity">
    <text evidence="1">Belongs to the bacterial ribosomal protein bL35 family.</text>
</comment>
<feature type="chain" id="PRO_0000258766" description="Large ribosomal subunit protein bL35">
    <location>
        <begin position="1"/>
        <end position="65"/>
    </location>
</feature>
<feature type="region of interest" description="Disordered" evidence="2">
    <location>
        <begin position="1"/>
        <end position="20"/>
    </location>
</feature>
<feature type="compositionally biased region" description="Basic residues" evidence="2">
    <location>
        <begin position="1"/>
        <end position="16"/>
    </location>
</feature>
<reference key="1">
    <citation type="journal article" date="2006" name="Proc. Natl. Acad. Sci. U.S.A.">
        <title>Molecular genetic anatomy of inter- and intraserotype variation in the human bacterial pathogen group A Streptococcus.</title>
        <authorList>
            <person name="Beres S.B."/>
            <person name="Richter E.W."/>
            <person name="Nagiec M.J."/>
            <person name="Sumby P."/>
            <person name="Porcella S.F."/>
            <person name="DeLeo F.R."/>
            <person name="Musser J.M."/>
        </authorList>
    </citation>
    <scope>NUCLEOTIDE SEQUENCE [LARGE SCALE GENOMIC DNA]</scope>
    <source>
        <strain>MGAS10750</strain>
    </source>
</reference>